<sequence length="194" mass="21680">MFIPYVIEKSSRGERSYDIYSRLLKDRIIMLSGEIHDELAASIVAQLLFLEAEDPTKDIYLYINSPGGVITSGFSIYDTMNYIKPDVCTICIGQAASMGAFLLSCGAEGKRFALPNSRIMIHQPLGGARGQATDIEIQAKEILRLKTILNDILAKNTKQKVAKIAKDTERDFFMSTQEAKEYGLIDKVLEKSFK</sequence>
<name>CLPP_CAMJJ</name>
<gene>
    <name evidence="1" type="primary">clpP</name>
    <name type="ordered locus">CJJ81176_0223</name>
</gene>
<protein>
    <recommendedName>
        <fullName evidence="1">ATP-dependent Clp protease proteolytic subunit</fullName>
        <ecNumber evidence="1">3.4.21.92</ecNumber>
    </recommendedName>
    <alternativeName>
        <fullName evidence="1">Endopeptidase Clp</fullName>
    </alternativeName>
</protein>
<dbReference type="EC" id="3.4.21.92" evidence="1"/>
<dbReference type="EMBL" id="CP000538">
    <property type="protein sequence ID" value="EAQ73303.1"/>
    <property type="molecule type" value="Genomic_DNA"/>
</dbReference>
<dbReference type="RefSeq" id="WP_002869062.1">
    <property type="nucleotide sequence ID" value="NC_008787.1"/>
</dbReference>
<dbReference type="SMR" id="A1VXS0"/>
<dbReference type="MEROPS" id="S14.001"/>
<dbReference type="KEGG" id="cjj:CJJ81176_0223"/>
<dbReference type="eggNOG" id="COG0740">
    <property type="taxonomic scope" value="Bacteria"/>
</dbReference>
<dbReference type="HOGENOM" id="CLU_058707_3_2_7"/>
<dbReference type="Proteomes" id="UP000000646">
    <property type="component" value="Chromosome"/>
</dbReference>
<dbReference type="GO" id="GO:0005737">
    <property type="term" value="C:cytoplasm"/>
    <property type="evidence" value="ECO:0007669"/>
    <property type="project" value="UniProtKB-SubCell"/>
</dbReference>
<dbReference type="GO" id="GO:0009368">
    <property type="term" value="C:endopeptidase Clp complex"/>
    <property type="evidence" value="ECO:0007669"/>
    <property type="project" value="TreeGrafter"/>
</dbReference>
<dbReference type="GO" id="GO:0004176">
    <property type="term" value="F:ATP-dependent peptidase activity"/>
    <property type="evidence" value="ECO:0007669"/>
    <property type="project" value="InterPro"/>
</dbReference>
<dbReference type="GO" id="GO:0051117">
    <property type="term" value="F:ATPase binding"/>
    <property type="evidence" value="ECO:0007669"/>
    <property type="project" value="TreeGrafter"/>
</dbReference>
<dbReference type="GO" id="GO:0004252">
    <property type="term" value="F:serine-type endopeptidase activity"/>
    <property type="evidence" value="ECO:0007669"/>
    <property type="project" value="UniProtKB-UniRule"/>
</dbReference>
<dbReference type="GO" id="GO:0006515">
    <property type="term" value="P:protein quality control for misfolded or incompletely synthesized proteins"/>
    <property type="evidence" value="ECO:0007669"/>
    <property type="project" value="TreeGrafter"/>
</dbReference>
<dbReference type="CDD" id="cd07017">
    <property type="entry name" value="S14_ClpP_2"/>
    <property type="match status" value="1"/>
</dbReference>
<dbReference type="FunFam" id="3.90.226.10:FF:000001">
    <property type="entry name" value="ATP-dependent Clp protease proteolytic subunit"/>
    <property type="match status" value="1"/>
</dbReference>
<dbReference type="Gene3D" id="3.90.226.10">
    <property type="entry name" value="2-enoyl-CoA Hydratase, Chain A, domain 1"/>
    <property type="match status" value="1"/>
</dbReference>
<dbReference type="HAMAP" id="MF_00444">
    <property type="entry name" value="ClpP"/>
    <property type="match status" value="1"/>
</dbReference>
<dbReference type="InterPro" id="IPR001907">
    <property type="entry name" value="ClpP"/>
</dbReference>
<dbReference type="InterPro" id="IPR029045">
    <property type="entry name" value="ClpP/crotonase-like_dom_sf"/>
</dbReference>
<dbReference type="InterPro" id="IPR023562">
    <property type="entry name" value="ClpP/TepA"/>
</dbReference>
<dbReference type="InterPro" id="IPR033135">
    <property type="entry name" value="ClpP_His_AS"/>
</dbReference>
<dbReference type="InterPro" id="IPR018215">
    <property type="entry name" value="ClpP_Ser_AS"/>
</dbReference>
<dbReference type="NCBIfam" id="TIGR00493">
    <property type="entry name" value="clpP"/>
    <property type="match status" value="1"/>
</dbReference>
<dbReference type="NCBIfam" id="NF001368">
    <property type="entry name" value="PRK00277.1"/>
    <property type="match status" value="1"/>
</dbReference>
<dbReference type="NCBIfam" id="NF009205">
    <property type="entry name" value="PRK12553.1"/>
    <property type="match status" value="1"/>
</dbReference>
<dbReference type="PANTHER" id="PTHR10381">
    <property type="entry name" value="ATP-DEPENDENT CLP PROTEASE PROTEOLYTIC SUBUNIT"/>
    <property type="match status" value="1"/>
</dbReference>
<dbReference type="PANTHER" id="PTHR10381:SF70">
    <property type="entry name" value="ATP-DEPENDENT CLP PROTEASE PROTEOLYTIC SUBUNIT"/>
    <property type="match status" value="1"/>
</dbReference>
<dbReference type="Pfam" id="PF00574">
    <property type="entry name" value="CLP_protease"/>
    <property type="match status" value="1"/>
</dbReference>
<dbReference type="PRINTS" id="PR00127">
    <property type="entry name" value="CLPPROTEASEP"/>
</dbReference>
<dbReference type="SUPFAM" id="SSF52096">
    <property type="entry name" value="ClpP/crotonase"/>
    <property type="match status" value="1"/>
</dbReference>
<dbReference type="PROSITE" id="PS00382">
    <property type="entry name" value="CLP_PROTEASE_HIS"/>
    <property type="match status" value="1"/>
</dbReference>
<dbReference type="PROSITE" id="PS00381">
    <property type="entry name" value="CLP_PROTEASE_SER"/>
    <property type="match status" value="1"/>
</dbReference>
<evidence type="ECO:0000255" key="1">
    <source>
        <dbReference type="HAMAP-Rule" id="MF_00444"/>
    </source>
</evidence>
<feature type="chain" id="PRO_1000026079" description="ATP-dependent Clp protease proteolytic subunit">
    <location>
        <begin position="1"/>
        <end position="194"/>
    </location>
</feature>
<feature type="active site" description="Nucleophile" evidence="1">
    <location>
        <position position="97"/>
    </location>
</feature>
<feature type="active site" evidence="1">
    <location>
        <position position="122"/>
    </location>
</feature>
<reference key="1">
    <citation type="submission" date="2006-12" db="EMBL/GenBank/DDBJ databases">
        <authorList>
            <person name="Fouts D.E."/>
            <person name="Nelson K.E."/>
            <person name="Sebastian Y."/>
        </authorList>
    </citation>
    <scope>NUCLEOTIDE SEQUENCE [LARGE SCALE GENOMIC DNA]</scope>
    <source>
        <strain>81-176</strain>
    </source>
</reference>
<comment type="function">
    <text evidence="1">Cleaves peptides in various proteins in a process that requires ATP hydrolysis. Has a chymotrypsin-like activity. Plays a major role in the degradation of misfolded proteins.</text>
</comment>
<comment type="catalytic activity">
    <reaction evidence="1">
        <text>Hydrolysis of proteins to small peptides in the presence of ATP and magnesium. alpha-casein is the usual test substrate. In the absence of ATP, only oligopeptides shorter than five residues are hydrolyzed (such as succinyl-Leu-Tyr-|-NHMec, and Leu-Tyr-Leu-|-Tyr-Trp, in which cleavage of the -Tyr-|-Leu- and -Tyr-|-Trp bonds also occurs).</text>
        <dbReference type="EC" id="3.4.21.92"/>
    </reaction>
</comment>
<comment type="subunit">
    <text evidence="1">Fourteen ClpP subunits assemble into 2 heptameric rings which stack back to back to give a disk-like structure with a central cavity, resembling the structure of eukaryotic proteasomes.</text>
</comment>
<comment type="subcellular location">
    <subcellularLocation>
        <location evidence="1">Cytoplasm</location>
    </subcellularLocation>
</comment>
<comment type="similarity">
    <text evidence="1">Belongs to the peptidase S14 family.</text>
</comment>
<keyword id="KW-0963">Cytoplasm</keyword>
<keyword id="KW-0378">Hydrolase</keyword>
<keyword id="KW-0645">Protease</keyword>
<keyword id="KW-0720">Serine protease</keyword>
<accession>A1VXS0</accession>
<organism>
    <name type="scientific">Campylobacter jejuni subsp. jejuni serotype O:23/36 (strain 81-176)</name>
    <dbReference type="NCBI Taxonomy" id="354242"/>
    <lineage>
        <taxon>Bacteria</taxon>
        <taxon>Pseudomonadati</taxon>
        <taxon>Campylobacterota</taxon>
        <taxon>Epsilonproteobacteria</taxon>
        <taxon>Campylobacterales</taxon>
        <taxon>Campylobacteraceae</taxon>
        <taxon>Campylobacter</taxon>
    </lineage>
</organism>
<proteinExistence type="inferred from homology"/>